<name>FENR1_BACHK</name>
<sequence>MNREELFDVTVIGGGPAGLYSAFYSGLREMKTKIIEFQPQLGGKIHVYPEKMIWDIGGLLPVTGEKLIEQLVQQGLTFQPEVVLNTKIESIIRNKDGIFTLKTSTGEEHFSKTVIVATGSGILNPQKLSIEGAERFEVSNLNYTVKSLKRFKNKTVIISGGGNSAIDWANELEPIAKKVYLTYRKEELSGHEAQVKQLMNSSAECFFNTSITTLIAGDNHEAIEYVELTNHETGEVSQLAIDEVIINHGYERDITLLENSELDVAIIDNYYIAGNANSESSVDGLYAAGDILKHEGKLHLIAGAFQDAGNAVNKAKQFIQPDASEYGMVSSHNEVFKKRNRELIKQMMK</sequence>
<organism>
    <name type="scientific">Bacillus thuringiensis subsp. konkukian (strain 97-27)</name>
    <dbReference type="NCBI Taxonomy" id="281309"/>
    <lineage>
        <taxon>Bacteria</taxon>
        <taxon>Bacillati</taxon>
        <taxon>Bacillota</taxon>
        <taxon>Bacilli</taxon>
        <taxon>Bacillales</taxon>
        <taxon>Bacillaceae</taxon>
        <taxon>Bacillus</taxon>
        <taxon>Bacillus cereus group</taxon>
    </lineage>
</organism>
<proteinExistence type="inferred from homology"/>
<protein>
    <recommendedName>
        <fullName evidence="1">Ferredoxin--NADP reductase 1</fullName>
        <shortName evidence="1">FNR 1</shortName>
        <shortName evidence="1">Fd-NADP(+) reductase 1</shortName>
        <ecNumber evidence="1">1.18.1.2</ecNumber>
    </recommendedName>
</protein>
<accession>Q6HP49</accession>
<evidence type="ECO:0000255" key="1">
    <source>
        <dbReference type="HAMAP-Rule" id="MF_01685"/>
    </source>
</evidence>
<feature type="chain" id="PRO_0000364804" description="Ferredoxin--NADP reductase 1">
    <location>
        <begin position="1"/>
        <end position="349"/>
    </location>
</feature>
<feature type="binding site" evidence="1">
    <location>
        <position position="36"/>
    </location>
    <ligand>
        <name>FAD</name>
        <dbReference type="ChEBI" id="CHEBI:57692"/>
    </ligand>
</feature>
<feature type="binding site" evidence="1">
    <location>
        <position position="44"/>
    </location>
    <ligand>
        <name>FAD</name>
        <dbReference type="ChEBI" id="CHEBI:57692"/>
    </ligand>
</feature>
<feature type="binding site" evidence="1">
    <location>
        <position position="48"/>
    </location>
    <ligand>
        <name>FAD</name>
        <dbReference type="ChEBI" id="CHEBI:57692"/>
    </ligand>
</feature>
<feature type="binding site" evidence="1">
    <location>
        <position position="88"/>
    </location>
    <ligand>
        <name>FAD</name>
        <dbReference type="ChEBI" id="CHEBI:57692"/>
    </ligand>
</feature>
<feature type="binding site" evidence="1">
    <location>
        <position position="123"/>
    </location>
    <ligand>
        <name>FAD</name>
        <dbReference type="ChEBI" id="CHEBI:57692"/>
    </ligand>
</feature>
<feature type="binding site" evidence="1">
    <location>
        <position position="290"/>
    </location>
    <ligand>
        <name>FAD</name>
        <dbReference type="ChEBI" id="CHEBI:57692"/>
    </ligand>
</feature>
<feature type="binding site" evidence="1">
    <location>
        <position position="331"/>
    </location>
    <ligand>
        <name>FAD</name>
        <dbReference type="ChEBI" id="CHEBI:57692"/>
    </ligand>
</feature>
<reference key="1">
    <citation type="journal article" date="2006" name="J. Bacteriol.">
        <title>Pathogenomic sequence analysis of Bacillus cereus and Bacillus thuringiensis isolates closely related to Bacillus anthracis.</title>
        <authorList>
            <person name="Han C.S."/>
            <person name="Xie G."/>
            <person name="Challacombe J.F."/>
            <person name="Altherr M.R."/>
            <person name="Bhotika S.S."/>
            <person name="Bruce D."/>
            <person name="Campbell C.S."/>
            <person name="Campbell M.L."/>
            <person name="Chen J."/>
            <person name="Chertkov O."/>
            <person name="Cleland C."/>
            <person name="Dimitrijevic M."/>
            <person name="Doggett N.A."/>
            <person name="Fawcett J.J."/>
            <person name="Glavina T."/>
            <person name="Goodwin L.A."/>
            <person name="Hill K.K."/>
            <person name="Hitchcock P."/>
            <person name="Jackson P.J."/>
            <person name="Keim P."/>
            <person name="Kewalramani A.R."/>
            <person name="Longmire J."/>
            <person name="Lucas S."/>
            <person name="Malfatti S."/>
            <person name="McMurry K."/>
            <person name="Meincke L.J."/>
            <person name="Misra M."/>
            <person name="Moseman B.L."/>
            <person name="Mundt M."/>
            <person name="Munk A.C."/>
            <person name="Okinaka R.T."/>
            <person name="Parson-Quintana B."/>
            <person name="Reilly L.P."/>
            <person name="Richardson P."/>
            <person name="Robinson D.L."/>
            <person name="Rubin E."/>
            <person name="Saunders E."/>
            <person name="Tapia R."/>
            <person name="Tesmer J.G."/>
            <person name="Thayer N."/>
            <person name="Thompson L.S."/>
            <person name="Tice H."/>
            <person name="Ticknor L.O."/>
            <person name="Wills P.L."/>
            <person name="Brettin T.S."/>
            <person name="Gilna P."/>
        </authorList>
    </citation>
    <scope>NUCLEOTIDE SEQUENCE [LARGE SCALE GENOMIC DNA]</scope>
    <source>
        <strain>97-27</strain>
    </source>
</reference>
<keyword id="KW-0274">FAD</keyword>
<keyword id="KW-0285">Flavoprotein</keyword>
<keyword id="KW-0521">NADP</keyword>
<keyword id="KW-0560">Oxidoreductase</keyword>
<gene>
    <name type="ordered locus">BT9727_0321</name>
</gene>
<dbReference type="EC" id="1.18.1.2" evidence="1"/>
<dbReference type="EMBL" id="AE017355">
    <property type="protein sequence ID" value="AAT58990.1"/>
    <property type="molecule type" value="Genomic_DNA"/>
</dbReference>
<dbReference type="RefSeq" id="WP_001078275.1">
    <property type="nucleotide sequence ID" value="NC_005957.1"/>
</dbReference>
<dbReference type="RefSeq" id="YP_034671.1">
    <property type="nucleotide sequence ID" value="NC_005957.1"/>
</dbReference>
<dbReference type="SMR" id="Q6HP49"/>
<dbReference type="KEGG" id="btk:BT9727_0321"/>
<dbReference type="PATRIC" id="fig|281309.8.peg.341"/>
<dbReference type="HOGENOM" id="CLU_031864_5_5_9"/>
<dbReference type="Proteomes" id="UP000001301">
    <property type="component" value="Chromosome"/>
</dbReference>
<dbReference type="GO" id="GO:0004324">
    <property type="term" value="F:ferredoxin-NADP+ reductase activity"/>
    <property type="evidence" value="ECO:0007669"/>
    <property type="project" value="UniProtKB-UniRule"/>
</dbReference>
<dbReference type="GO" id="GO:0050660">
    <property type="term" value="F:flavin adenine dinucleotide binding"/>
    <property type="evidence" value="ECO:0007669"/>
    <property type="project" value="UniProtKB-UniRule"/>
</dbReference>
<dbReference type="GO" id="GO:0050661">
    <property type="term" value="F:NADP binding"/>
    <property type="evidence" value="ECO:0007669"/>
    <property type="project" value="UniProtKB-UniRule"/>
</dbReference>
<dbReference type="Gene3D" id="3.50.50.60">
    <property type="entry name" value="FAD/NAD(P)-binding domain"/>
    <property type="match status" value="2"/>
</dbReference>
<dbReference type="HAMAP" id="MF_01685">
    <property type="entry name" value="FENR2"/>
    <property type="match status" value="1"/>
</dbReference>
<dbReference type="InterPro" id="IPR036188">
    <property type="entry name" value="FAD/NAD-bd_sf"/>
</dbReference>
<dbReference type="InterPro" id="IPR023753">
    <property type="entry name" value="FAD/NAD-binding_dom"/>
</dbReference>
<dbReference type="InterPro" id="IPR022890">
    <property type="entry name" value="Fd--NADP_Rdtase_type_2"/>
</dbReference>
<dbReference type="InterPro" id="IPR050097">
    <property type="entry name" value="Ferredoxin-NADP_redctase_2"/>
</dbReference>
<dbReference type="PANTHER" id="PTHR48105">
    <property type="entry name" value="THIOREDOXIN REDUCTASE 1-RELATED-RELATED"/>
    <property type="match status" value="1"/>
</dbReference>
<dbReference type="Pfam" id="PF07992">
    <property type="entry name" value="Pyr_redox_2"/>
    <property type="match status" value="1"/>
</dbReference>
<dbReference type="PRINTS" id="PR00368">
    <property type="entry name" value="FADPNR"/>
</dbReference>
<dbReference type="PRINTS" id="PR00469">
    <property type="entry name" value="PNDRDTASEII"/>
</dbReference>
<dbReference type="SUPFAM" id="SSF51905">
    <property type="entry name" value="FAD/NAD(P)-binding domain"/>
    <property type="match status" value="1"/>
</dbReference>
<comment type="catalytic activity">
    <reaction evidence="1">
        <text>2 reduced [2Fe-2S]-[ferredoxin] + NADP(+) + H(+) = 2 oxidized [2Fe-2S]-[ferredoxin] + NADPH</text>
        <dbReference type="Rhea" id="RHEA:20125"/>
        <dbReference type="Rhea" id="RHEA-COMP:10000"/>
        <dbReference type="Rhea" id="RHEA-COMP:10001"/>
        <dbReference type="ChEBI" id="CHEBI:15378"/>
        <dbReference type="ChEBI" id="CHEBI:33737"/>
        <dbReference type="ChEBI" id="CHEBI:33738"/>
        <dbReference type="ChEBI" id="CHEBI:57783"/>
        <dbReference type="ChEBI" id="CHEBI:58349"/>
        <dbReference type="EC" id="1.18.1.2"/>
    </reaction>
</comment>
<comment type="cofactor">
    <cofactor evidence="1">
        <name>FAD</name>
        <dbReference type="ChEBI" id="CHEBI:57692"/>
    </cofactor>
    <text evidence="1">Binds 1 FAD per subunit.</text>
</comment>
<comment type="subunit">
    <text evidence="1">Homodimer.</text>
</comment>
<comment type="similarity">
    <text evidence="1">Belongs to the ferredoxin--NADP reductase type 2 family.</text>
</comment>